<name>RL20A_SCHPO</name>
<sequence>MALKEYQVVGRKVPTEHEPVPKLFRMRLFAPNESVAKSRYWYFLKMINKVKKATGEIVAINEISEPKPLKAKVFGIWIRYDSRSGTHNMYKEFRDTTRVGAVEAMYADMAARHRARFRSIRILKVVEVEKKEDVRRNYVKQLLNPHLKFPLPHRRTGVVGLAGKKVFAPHRPSTFY</sequence>
<reference key="1">
    <citation type="journal article" date="2002" name="Nature">
        <title>The genome sequence of Schizosaccharomyces pombe.</title>
        <authorList>
            <person name="Wood V."/>
            <person name="Gwilliam R."/>
            <person name="Rajandream M.A."/>
            <person name="Lyne M.H."/>
            <person name="Lyne R."/>
            <person name="Stewart A."/>
            <person name="Sgouros J.G."/>
            <person name="Peat N."/>
            <person name="Hayles J."/>
            <person name="Baker S.G."/>
            <person name="Basham D."/>
            <person name="Bowman S."/>
            <person name="Brooks K."/>
            <person name="Brown D."/>
            <person name="Brown S."/>
            <person name="Chillingworth T."/>
            <person name="Churcher C.M."/>
            <person name="Collins M."/>
            <person name="Connor R."/>
            <person name="Cronin A."/>
            <person name="Davis P."/>
            <person name="Feltwell T."/>
            <person name="Fraser A."/>
            <person name="Gentles S."/>
            <person name="Goble A."/>
            <person name="Hamlin N."/>
            <person name="Harris D.E."/>
            <person name="Hidalgo J."/>
            <person name="Hodgson G."/>
            <person name="Holroyd S."/>
            <person name="Hornsby T."/>
            <person name="Howarth S."/>
            <person name="Huckle E.J."/>
            <person name="Hunt S."/>
            <person name="Jagels K."/>
            <person name="James K.D."/>
            <person name="Jones L."/>
            <person name="Jones M."/>
            <person name="Leather S."/>
            <person name="McDonald S."/>
            <person name="McLean J."/>
            <person name="Mooney P."/>
            <person name="Moule S."/>
            <person name="Mungall K.L."/>
            <person name="Murphy L.D."/>
            <person name="Niblett D."/>
            <person name="Odell C."/>
            <person name="Oliver K."/>
            <person name="O'Neil S."/>
            <person name="Pearson D."/>
            <person name="Quail M.A."/>
            <person name="Rabbinowitsch E."/>
            <person name="Rutherford K.M."/>
            <person name="Rutter S."/>
            <person name="Saunders D."/>
            <person name="Seeger K."/>
            <person name="Sharp S."/>
            <person name="Skelton J."/>
            <person name="Simmonds M.N."/>
            <person name="Squares R."/>
            <person name="Squares S."/>
            <person name="Stevens K."/>
            <person name="Taylor K."/>
            <person name="Taylor R.G."/>
            <person name="Tivey A."/>
            <person name="Walsh S.V."/>
            <person name="Warren T."/>
            <person name="Whitehead S."/>
            <person name="Woodward J.R."/>
            <person name="Volckaert G."/>
            <person name="Aert R."/>
            <person name="Robben J."/>
            <person name="Grymonprez B."/>
            <person name="Weltjens I."/>
            <person name="Vanstreels E."/>
            <person name="Rieger M."/>
            <person name="Schaefer M."/>
            <person name="Mueller-Auer S."/>
            <person name="Gabel C."/>
            <person name="Fuchs M."/>
            <person name="Duesterhoeft A."/>
            <person name="Fritzc C."/>
            <person name="Holzer E."/>
            <person name="Moestl D."/>
            <person name="Hilbert H."/>
            <person name="Borzym K."/>
            <person name="Langer I."/>
            <person name="Beck A."/>
            <person name="Lehrach H."/>
            <person name="Reinhardt R."/>
            <person name="Pohl T.M."/>
            <person name="Eger P."/>
            <person name="Zimmermann W."/>
            <person name="Wedler H."/>
            <person name="Wambutt R."/>
            <person name="Purnelle B."/>
            <person name="Goffeau A."/>
            <person name="Cadieu E."/>
            <person name="Dreano S."/>
            <person name="Gloux S."/>
            <person name="Lelaure V."/>
            <person name="Mottier S."/>
            <person name="Galibert F."/>
            <person name="Aves S.J."/>
            <person name="Xiang Z."/>
            <person name="Hunt C."/>
            <person name="Moore K."/>
            <person name="Hurst S.M."/>
            <person name="Lucas M."/>
            <person name="Rochet M."/>
            <person name="Gaillardin C."/>
            <person name="Tallada V.A."/>
            <person name="Garzon A."/>
            <person name="Thode G."/>
            <person name="Daga R.R."/>
            <person name="Cruzado L."/>
            <person name="Jimenez J."/>
            <person name="Sanchez M."/>
            <person name="del Rey F."/>
            <person name="Benito J."/>
            <person name="Dominguez A."/>
            <person name="Revuelta J.L."/>
            <person name="Moreno S."/>
            <person name="Armstrong J."/>
            <person name="Forsburg S.L."/>
            <person name="Cerutti L."/>
            <person name="Lowe T."/>
            <person name="McCombie W.R."/>
            <person name="Paulsen I."/>
            <person name="Potashkin J."/>
            <person name="Shpakovski G.V."/>
            <person name="Ussery D."/>
            <person name="Barrell B.G."/>
            <person name="Nurse P."/>
        </authorList>
    </citation>
    <scope>NUCLEOTIDE SEQUENCE [LARGE SCALE GENOMIC DNA]</scope>
    <source>
        <strain>972 / ATCC 24843</strain>
    </source>
</reference>
<reference key="2">
    <citation type="journal article" date="1983" name="Mol. Gen. Genet.">
        <title>Yeast ribosomal proteins: VII. Cytoplasmic ribosomal proteins from Schizosaccharomyces pombe.</title>
        <authorList>
            <person name="Otaka E."/>
            <person name="Higo K."/>
            <person name="Itoh T."/>
        </authorList>
    </citation>
    <scope>PROTEIN SEQUENCE OF 2-46</scope>
</reference>
<reference key="3">
    <citation type="journal article" date="2006" name="Nat. Biotechnol.">
        <title>ORFeome cloning and global analysis of protein localization in the fission yeast Schizosaccharomyces pombe.</title>
        <authorList>
            <person name="Matsuyama A."/>
            <person name="Arai R."/>
            <person name="Yashiroda Y."/>
            <person name="Shirai A."/>
            <person name="Kamata A."/>
            <person name="Sekido S."/>
            <person name="Kobayashi Y."/>
            <person name="Hashimoto A."/>
            <person name="Hamamoto M."/>
            <person name="Hiraoka Y."/>
            <person name="Horinouchi S."/>
            <person name="Yoshida M."/>
        </authorList>
    </citation>
    <scope>SUBCELLULAR LOCATION [LARGE SCALE ANALYSIS]</scope>
</reference>
<dbReference type="EMBL" id="CU329670">
    <property type="protein sequence ID" value="CAB08755.1"/>
    <property type="molecule type" value="Genomic_DNA"/>
</dbReference>
<dbReference type="PIR" id="S10051">
    <property type="entry name" value="S10051"/>
</dbReference>
<dbReference type="PIR" id="T38392">
    <property type="entry name" value="T38392"/>
</dbReference>
<dbReference type="RefSeq" id="NP_593336.1">
    <property type="nucleotide sequence ID" value="NM_001018768.2"/>
</dbReference>
<dbReference type="PDB" id="8ESQ">
    <property type="method" value="EM"/>
    <property type="resolution" value="2.80 A"/>
    <property type="chains" value="S=1-176"/>
</dbReference>
<dbReference type="PDB" id="8ESR">
    <property type="method" value="EM"/>
    <property type="resolution" value="3.20 A"/>
    <property type="chains" value="S=1-176"/>
</dbReference>
<dbReference type="PDB" id="8ETC">
    <property type="method" value="EM"/>
    <property type="resolution" value="3.10 A"/>
    <property type="chains" value="S=1-176"/>
</dbReference>
<dbReference type="PDB" id="8ETG">
    <property type="method" value="EM"/>
    <property type="resolution" value="3.40 A"/>
    <property type="chains" value="S=1-176"/>
</dbReference>
<dbReference type="PDB" id="8ETH">
    <property type="method" value="EM"/>
    <property type="resolution" value="3.80 A"/>
    <property type="chains" value="S=1-176"/>
</dbReference>
<dbReference type="PDB" id="8ETI">
    <property type="method" value="EM"/>
    <property type="resolution" value="3.70 A"/>
    <property type="chains" value="S=1-176"/>
</dbReference>
<dbReference type="PDB" id="8ETJ">
    <property type="method" value="EM"/>
    <property type="resolution" value="3.20 A"/>
    <property type="chains" value="S=1-176"/>
</dbReference>
<dbReference type="PDB" id="8EUG">
    <property type="method" value="EM"/>
    <property type="resolution" value="2.80 A"/>
    <property type="chains" value="S=1-176"/>
</dbReference>
<dbReference type="PDB" id="8EUI">
    <property type="method" value="EM"/>
    <property type="resolution" value="3.10 A"/>
    <property type="chains" value="S=1-176"/>
</dbReference>
<dbReference type="PDB" id="8EUP">
    <property type="method" value="EM"/>
    <property type="resolution" value="3.10 A"/>
    <property type="chains" value="S=1-176"/>
</dbReference>
<dbReference type="PDB" id="8EUY">
    <property type="method" value="EM"/>
    <property type="resolution" value="3.00 A"/>
    <property type="chains" value="S=1-176"/>
</dbReference>
<dbReference type="PDB" id="8EV3">
    <property type="method" value="EM"/>
    <property type="resolution" value="3.00 A"/>
    <property type="chains" value="S=1-176"/>
</dbReference>
<dbReference type="PDB" id="9AXT">
    <property type="method" value="EM"/>
    <property type="resolution" value="2.40 A"/>
    <property type="chains" value="Be=1-176"/>
</dbReference>
<dbReference type="PDB" id="9AXU">
    <property type="method" value="EM"/>
    <property type="resolution" value="1.94 A"/>
    <property type="chains" value="e=1-176"/>
</dbReference>
<dbReference type="PDB" id="9AXV">
    <property type="method" value="EM"/>
    <property type="resolution" value="2.40 A"/>
    <property type="chains" value="Be=1-176"/>
</dbReference>
<dbReference type="PDBsum" id="8ESQ"/>
<dbReference type="PDBsum" id="8ESR"/>
<dbReference type="PDBsum" id="8ETC"/>
<dbReference type="PDBsum" id="8ETG"/>
<dbReference type="PDBsum" id="8ETH"/>
<dbReference type="PDBsum" id="8ETI"/>
<dbReference type="PDBsum" id="8ETJ"/>
<dbReference type="PDBsum" id="8EUG"/>
<dbReference type="PDBsum" id="8EUI"/>
<dbReference type="PDBsum" id="8EUP"/>
<dbReference type="PDBsum" id="8EUY"/>
<dbReference type="PDBsum" id="8EV3"/>
<dbReference type="PDBsum" id="9AXT"/>
<dbReference type="PDBsum" id="9AXU"/>
<dbReference type="PDBsum" id="9AXV"/>
<dbReference type="EMDB" id="EMD-43972"/>
<dbReference type="EMDB" id="EMD-43973"/>
<dbReference type="EMDB" id="EMD-43976"/>
<dbReference type="SMR" id="P0CT68"/>
<dbReference type="FunCoup" id="P0CT68">
    <property type="interactions" value="497"/>
</dbReference>
<dbReference type="STRING" id="284812.P0CT68"/>
<dbReference type="iPTMnet" id="P0CT68"/>
<dbReference type="PaxDb" id="4896-SPAC26A3.04.1"/>
<dbReference type="EnsemblFungi" id="SPAC26A3.04.1">
    <property type="protein sequence ID" value="SPAC26A3.04.1:pep"/>
    <property type="gene ID" value="SPAC26A3.04"/>
</dbReference>
<dbReference type="EnsemblFungi" id="SPAC3A12.10.1">
    <property type="protein sequence ID" value="SPAC3A12.10.1:pep"/>
    <property type="gene ID" value="SPAC3A12.10"/>
</dbReference>
<dbReference type="GeneID" id="2542725"/>
<dbReference type="KEGG" id="spo:2542093"/>
<dbReference type="KEGG" id="spo:2542725"/>
<dbReference type="PomBase" id="SPAC3A12.10">
    <property type="gene designation" value="rpl2001"/>
</dbReference>
<dbReference type="VEuPathDB" id="FungiDB:SPAC26A3.04"/>
<dbReference type="VEuPathDB" id="FungiDB:SPAC3A12.10"/>
<dbReference type="eggNOG" id="KOG0829">
    <property type="taxonomic scope" value="Eukaryota"/>
</dbReference>
<dbReference type="InParanoid" id="P0CT68"/>
<dbReference type="OMA" id="CIFAKND"/>
<dbReference type="PhylomeDB" id="P0CT68"/>
<dbReference type="Reactome" id="R-SPO-156827">
    <property type="pathway name" value="L13a-mediated translational silencing of Ceruloplasmin expression"/>
</dbReference>
<dbReference type="Reactome" id="R-SPO-1799339">
    <property type="pathway name" value="SRP-dependent cotranslational protein targeting to membrane"/>
</dbReference>
<dbReference type="Reactome" id="R-SPO-72689">
    <property type="pathway name" value="Formation of a pool of free 40S subunits"/>
</dbReference>
<dbReference type="Reactome" id="R-SPO-72706">
    <property type="pathway name" value="GTP hydrolysis and joining of the 60S ribosomal subunit"/>
</dbReference>
<dbReference type="Reactome" id="R-SPO-975956">
    <property type="pathway name" value="Nonsense Mediated Decay (NMD) independent of the Exon Junction Complex (EJC)"/>
</dbReference>
<dbReference type="Reactome" id="R-SPO-975957">
    <property type="pathway name" value="Nonsense Mediated Decay (NMD) enhanced by the Exon Junction Complex (EJC)"/>
</dbReference>
<dbReference type="PRO" id="PR:P0CT68"/>
<dbReference type="Proteomes" id="UP000002485">
    <property type="component" value="Chromosome I"/>
</dbReference>
<dbReference type="GO" id="GO:0005829">
    <property type="term" value="C:cytosol"/>
    <property type="evidence" value="ECO:0007005"/>
    <property type="project" value="PomBase"/>
</dbReference>
<dbReference type="GO" id="GO:0022625">
    <property type="term" value="C:cytosolic large ribosomal subunit"/>
    <property type="evidence" value="ECO:0000269"/>
    <property type="project" value="PomBase"/>
</dbReference>
<dbReference type="GO" id="GO:0030684">
    <property type="term" value="C:preribosome"/>
    <property type="evidence" value="ECO:0000314"/>
    <property type="project" value="PomBase"/>
</dbReference>
<dbReference type="GO" id="GO:0003735">
    <property type="term" value="F:structural constituent of ribosome"/>
    <property type="evidence" value="ECO:0000318"/>
    <property type="project" value="GO_Central"/>
</dbReference>
<dbReference type="GO" id="GO:0002181">
    <property type="term" value="P:cytoplasmic translation"/>
    <property type="evidence" value="ECO:0000318"/>
    <property type="project" value="GO_Central"/>
</dbReference>
<dbReference type="FunFam" id="3.10.20.10:FF:000001">
    <property type="entry name" value="60S ribosomal protein L18a"/>
    <property type="match status" value="1"/>
</dbReference>
<dbReference type="FunFam" id="3.10.20.10:FF:000002">
    <property type="entry name" value="60S ribosomal protein L18a"/>
    <property type="match status" value="1"/>
</dbReference>
<dbReference type="Gene3D" id="3.10.20.10">
    <property type="match status" value="2"/>
</dbReference>
<dbReference type="HAMAP" id="MF_00273">
    <property type="entry name" value="Ribosomal_eL20"/>
    <property type="match status" value="1"/>
</dbReference>
<dbReference type="InterPro" id="IPR028877">
    <property type="entry name" value="Ribosomal_eL20"/>
</dbReference>
<dbReference type="InterPro" id="IPR023573">
    <property type="entry name" value="Ribosomal_eL20_dom"/>
</dbReference>
<dbReference type="InterPro" id="IPR021138">
    <property type="entry name" value="Ribosomal_eL20_eukaryotes"/>
</dbReference>
<dbReference type="PANTHER" id="PTHR10052">
    <property type="entry name" value="60S RIBOSOMAL PROTEIN L18A"/>
    <property type="match status" value="1"/>
</dbReference>
<dbReference type="Pfam" id="PF01775">
    <property type="entry name" value="Ribosomal_L18A"/>
    <property type="match status" value="1"/>
</dbReference>
<dbReference type="PIRSF" id="PIRSF002190">
    <property type="entry name" value="Ribosomal_L18a"/>
    <property type="match status" value="1"/>
</dbReference>
<dbReference type="SUPFAM" id="SSF160374">
    <property type="entry name" value="RplX-like"/>
    <property type="match status" value="1"/>
</dbReference>
<proteinExistence type="evidence at protein level"/>
<protein>
    <recommendedName>
        <fullName evidence="5">Large ribosomal subunit protein eL20A</fullName>
    </recommendedName>
    <alternativeName>
        <fullName>60S ribosomal protein L20-A</fullName>
    </alternativeName>
    <alternativeName>
        <fullName evidence="4">SP-L17</fullName>
    </alternativeName>
</protein>
<feature type="initiator methionine" description="Removed" evidence="3">
    <location>
        <position position="1"/>
    </location>
</feature>
<feature type="chain" id="PRO_0000213938" description="Large ribosomal subunit protein eL20A">
    <location>
        <begin position="2"/>
        <end position="176"/>
    </location>
</feature>
<feature type="sequence conflict" description="In Ref. 2; AA sequence." evidence="5" ref="2">
    <original>WY</original>
    <variation>GT</variation>
    <location>
        <begin position="41"/>
        <end position="42"/>
    </location>
</feature>
<feature type="strand" evidence="9">
    <location>
        <begin position="4"/>
        <end position="12"/>
    </location>
</feature>
<feature type="strand" evidence="9">
    <location>
        <begin position="24"/>
        <end position="32"/>
    </location>
</feature>
<feature type="helix" evidence="9">
    <location>
        <begin position="33"/>
        <end position="47"/>
    </location>
</feature>
<feature type="turn" evidence="8">
    <location>
        <begin position="52"/>
        <end position="54"/>
    </location>
</feature>
<feature type="strand" evidence="9">
    <location>
        <begin position="55"/>
        <end position="62"/>
    </location>
</feature>
<feature type="strand" evidence="9">
    <location>
        <begin position="72"/>
        <end position="80"/>
    </location>
</feature>
<feature type="strand" evidence="6">
    <location>
        <begin position="83"/>
        <end position="85"/>
    </location>
</feature>
<feature type="strand" evidence="9">
    <location>
        <begin position="87"/>
        <end position="97"/>
    </location>
</feature>
<feature type="helix" evidence="9">
    <location>
        <begin position="98"/>
        <end position="112"/>
    </location>
</feature>
<feature type="turn" evidence="9">
    <location>
        <begin position="117"/>
        <end position="119"/>
    </location>
</feature>
<feature type="strand" evidence="9">
    <location>
        <begin position="121"/>
        <end position="127"/>
    </location>
</feature>
<feature type="turn" evidence="8">
    <location>
        <begin position="131"/>
        <end position="133"/>
    </location>
</feature>
<feature type="helix" evidence="9">
    <location>
        <begin position="137"/>
        <end position="142"/>
    </location>
</feature>
<feature type="turn" evidence="7">
    <location>
        <begin position="154"/>
        <end position="158"/>
    </location>
</feature>
<feature type="strand" evidence="7">
    <location>
        <begin position="162"/>
        <end position="164"/>
    </location>
</feature>
<feature type="strand" evidence="9">
    <location>
        <begin position="167"/>
        <end position="170"/>
    </location>
</feature>
<evidence type="ECO:0000250" key="1">
    <source>
        <dbReference type="UniProtKB" id="P0CX23"/>
    </source>
</evidence>
<evidence type="ECO:0000269" key="2">
    <source>
    </source>
</evidence>
<evidence type="ECO:0000269" key="3">
    <source>
    </source>
</evidence>
<evidence type="ECO:0000303" key="4">
    <source>
    </source>
</evidence>
<evidence type="ECO:0000305" key="5"/>
<evidence type="ECO:0007829" key="6">
    <source>
        <dbReference type="PDB" id="8ETC"/>
    </source>
</evidence>
<evidence type="ECO:0007829" key="7">
    <source>
        <dbReference type="PDB" id="8ETG"/>
    </source>
</evidence>
<evidence type="ECO:0007829" key="8">
    <source>
        <dbReference type="PDB" id="8EUP"/>
    </source>
</evidence>
<evidence type="ECO:0007829" key="9">
    <source>
        <dbReference type="PDB" id="8EUY"/>
    </source>
</evidence>
<keyword id="KW-0002">3D-structure</keyword>
<keyword id="KW-0963">Cytoplasm</keyword>
<keyword id="KW-0903">Direct protein sequencing</keyword>
<keyword id="KW-1185">Reference proteome</keyword>
<keyword id="KW-0687">Ribonucleoprotein</keyword>
<keyword id="KW-0689">Ribosomal protein</keyword>
<gene>
    <name type="primary">rpl2001</name>
    <name type="synonym">rpl20a</name>
    <name type="ORF">SPAC3A12.10</name>
</gene>
<organism>
    <name type="scientific">Schizosaccharomyces pombe (strain 972 / ATCC 24843)</name>
    <name type="common">Fission yeast</name>
    <dbReference type="NCBI Taxonomy" id="284812"/>
    <lineage>
        <taxon>Eukaryota</taxon>
        <taxon>Fungi</taxon>
        <taxon>Dikarya</taxon>
        <taxon>Ascomycota</taxon>
        <taxon>Taphrinomycotina</taxon>
        <taxon>Schizosaccharomycetes</taxon>
        <taxon>Schizosaccharomycetales</taxon>
        <taxon>Schizosaccharomycetaceae</taxon>
        <taxon>Schizosaccharomyces</taxon>
    </lineage>
</organism>
<accession>P0CT68</accession>
<accession>P05732</accession>
<comment type="function">
    <text evidence="1">Component of the ribosome, a large ribonucleoprotein complex responsible for the synthesis of proteins in the cell. The small ribosomal subunit (SSU) binds messenger RNAs (mRNAs) and translates the encoded message by selecting cognate aminoacyl-transfer RNA (tRNA) molecules. The large subunit (LSU) contains the ribosomal catalytic site termed the peptidyl transferase center (PTC), which catalyzes the formation of peptide bonds, thereby polymerizing the amino acids delivered by tRNAs into a polypeptide chain. The nascent polypeptides leave the ribosome through a tunnel in the LSU and interact with protein factors that function in enzymatic processing, targeting, and the membrane insertion of nascent chains at the exit of the ribosomal tunnel.</text>
</comment>
<comment type="subunit">
    <text evidence="1">Component of the large ribosomal subunit (LSU). Mature yeast ribosomes consist of a small (40S) and a large (60S) subunit. The 40S small subunit contains 1 molecule of ribosomal RNA (18S rRNA) and at least 33 different proteins. The large 60S subunit contains 3 rRNA molecules (25S, 5.8S and 5S rRNA) and at least 46 different proteins. eL20 forms multiple interactions with RNA and proteins in the central protuberance, connecting components of core functional centers that are located far apart.</text>
</comment>
<comment type="subcellular location">
    <subcellularLocation>
        <location evidence="2">Cytoplasm</location>
    </subcellularLocation>
</comment>
<comment type="miscellaneous">
    <text>There are 2 genes for eL20 in S.pombe.</text>
</comment>
<comment type="similarity">
    <text evidence="5">Belongs to the eukaryotic ribosomal protein eL20 family.</text>
</comment>